<keyword id="KW-0285">Flavoprotein</keyword>
<keyword id="KW-0288">FMN</keyword>
<keyword id="KW-0560">Oxidoreductase</keyword>
<keyword id="KW-0664">Pyridoxine biosynthesis</keyword>
<keyword id="KW-1185">Reference proteome</keyword>
<gene>
    <name evidence="1" type="primary">pdxH</name>
    <name type="ordered locus">MXAN_1295</name>
</gene>
<reference key="1">
    <citation type="journal article" date="2006" name="Proc. Natl. Acad. Sci. U.S.A.">
        <title>Evolution of sensory complexity recorded in a myxobacterial genome.</title>
        <authorList>
            <person name="Goldman B.S."/>
            <person name="Nierman W.C."/>
            <person name="Kaiser D."/>
            <person name="Slater S.C."/>
            <person name="Durkin A.S."/>
            <person name="Eisen J.A."/>
            <person name="Ronning C.M."/>
            <person name="Barbazuk W.B."/>
            <person name="Blanchard M."/>
            <person name="Field C."/>
            <person name="Halling C."/>
            <person name="Hinkle G."/>
            <person name="Iartchuk O."/>
            <person name="Kim H.S."/>
            <person name="Mackenzie C."/>
            <person name="Madupu R."/>
            <person name="Miller N."/>
            <person name="Shvartsbeyn A."/>
            <person name="Sullivan S.A."/>
            <person name="Vaudin M."/>
            <person name="Wiegand R."/>
            <person name="Kaplan H.B."/>
        </authorList>
    </citation>
    <scope>NUCLEOTIDE SEQUENCE [LARGE SCALE GENOMIC DNA]</scope>
    <source>
        <strain>DK1622</strain>
    </source>
</reference>
<proteinExistence type="inferred from homology"/>
<feature type="chain" id="PRO_0000255872" description="Pyridoxine/pyridoxamine 5'-phosphate oxidase">
    <location>
        <begin position="1"/>
        <end position="206"/>
    </location>
</feature>
<feature type="binding site" evidence="1">
    <location>
        <begin position="55"/>
        <end position="60"/>
    </location>
    <ligand>
        <name>FMN</name>
        <dbReference type="ChEBI" id="CHEBI:58210"/>
    </ligand>
</feature>
<feature type="binding site" evidence="1">
    <location>
        <position position="60"/>
    </location>
    <ligand>
        <name>substrate</name>
    </ligand>
</feature>
<feature type="binding site" evidence="1">
    <location>
        <begin position="70"/>
        <end position="71"/>
    </location>
    <ligand>
        <name>FMN</name>
        <dbReference type="ChEBI" id="CHEBI:58210"/>
    </ligand>
</feature>
<feature type="binding site" evidence="1">
    <location>
        <position position="76"/>
    </location>
    <ligand>
        <name>FMN</name>
        <dbReference type="ChEBI" id="CHEBI:58210"/>
    </ligand>
</feature>
<feature type="binding site" evidence="1">
    <location>
        <position position="77"/>
    </location>
    <ligand>
        <name>FMN</name>
        <dbReference type="ChEBI" id="CHEBI:58210"/>
    </ligand>
</feature>
<feature type="binding site" evidence="1">
    <location>
        <position position="99"/>
    </location>
    <ligand>
        <name>FMN</name>
        <dbReference type="ChEBI" id="CHEBI:58210"/>
    </ligand>
</feature>
<feature type="binding site" evidence="1">
    <location>
        <position position="117"/>
    </location>
    <ligand>
        <name>substrate</name>
    </ligand>
</feature>
<feature type="binding site" evidence="1">
    <location>
        <position position="121"/>
    </location>
    <ligand>
        <name>substrate</name>
    </ligand>
</feature>
<feature type="binding site" evidence="1">
    <location>
        <position position="125"/>
    </location>
    <ligand>
        <name>substrate</name>
    </ligand>
</feature>
<feature type="binding site" evidence="1">
    <location>
        <begin position="134"/>
        <end position="135"/>
    </location>
    <ligand>
        <name>FMN</name>
        <dbReference type="ChEBI" id="CHEBI:58210"/>
    </ligand>
</feature>
<feature type="binding site" evidence="1">
    <location>
        <position position="179"/>
    </location>
    <ligand>
        <name>FMN</name>
        <dbReference type="ChEBI" id="CHEBI:58210"/>
    </ligand>
</feature>
<feature type="binding site" evidence="1">
    <location>
        <begin position="185"/>
        <end position="187"/>
    </location>
    <ligand>
        <name>substrate</name>
    </ligand>
</feature>
<feature type="binding site" evidence="1">
    <location>
        <position position="189"/>
    </location>
    <ligand>
        <name>FMN</name>
        <dbReference type="ChEBI" id="CHEBI:58210"/>
    </ligand>
</feature>
<sequence length="206" mass="23783">MHTCRAPFMLHRVMIPPDPIQRFAELFERAKQAIAVDPNAMVVATVGDDGRPSARVVLLKDFDARGFVFYTNHESRKGREARAHPYAALCFYWQPLNEQVRVEGRVERVTDAEADAYFQSRARGSQVGAWASLQSQPLATREELEARVAEVEQKYAGQPVPRPPHWSGFRVVPDRIEFWHAQESRLHDRHVYLREDGGWRTQMLYP</sequence>
<accession>Q1DCS1</accession>
<comment type="function">
    <text evidence="1">Catalyzes the oxidation of either pyridoxine 5'-phosphate (PNP) or pyridoxamine 5'-phosphate (PMP) into pyridoxal 5'-phosphate (PLP).</text>
</comment>
<comment type="catalytic activity">
    <reaction evidence="1">
        <text>pyridoxamine 5'-phosphate + O2 + H2O = pyridoxal 5'-phosphate + H2O2 + NH4(+)</text>
        <dbReference type="Rhea" id="RHEA:15817"/>
        <dbReference type="ChEBI" id="CHEBI:15377"/>
        <dbReference type="ChEBI" id="CHEBI:15379"/>
        <dbReference type="ChEBI" id="CHEBI:16240"/>
        <dbReference type="ChEBI" id="CHEBI:28938"/>
        <dbReference type="ChEBI" id="CHEBI:58451"/>
        <dbReference type="ChEBI" id="CHEBI:597326"/>
        <dbReference type="EC" id="1.4.3.5"/>
    </reaction>
</comment>
<comment type="catalytic activity">
    <reaction evidence="1">
        <text>pyridoxine 5'-phosphate + O2 = pyridoxal 5'-phosphate + H2O2</text>
        <dbReference type="Rhea" id="RHEA:15149"/>
        <dbReference type="ChEBI" id="CHEBI:15379"/>
        <dbReference type="ChEBI" id="CHEBI:16240"/>
        <dbReference type="ChEBI" id="CHEBI:58589"/>
        <dbReference type="ChEBI" id="CHEBI:597326"/>
        <dbReference type="EC" id="1.4.3.5"/>
    </reaction>
</comment>
<comment type="cofactor">
    <cofactor evidence="1">
        <name>FMN</name>
        <dbReference type="ChEBI" id="CHEBI:58210"/>
    </cofactor>
    <text evidence="1">Binds 1 FMN per subunit.</text>
</comment>
<comment type="pathway">
    <text evidence="1">Cofactor metabolism; pyridoxal 5'-phosphate salvage; pyridoxal 5'-phosphate from pyridoxamine 5'-phosphate: step 1/1.</text>
</comment>
<comment type="pathway">
    <text evidence="1">Cofactor metabolism; pyridoxal 5'-phosphate salvage; pyridoxal 5'-phosphate from pyridoxine 5'-phosphate: step 1/1.</text>
</comment>
<comment type="subunit">
    <text evidence="1">Homodimer.</text>
</comment>
<comment type="similarity">
    <text evidence="1">Belongs to the pyridoxamine 5'-phosphate oxidase family.</text>
</comment>
<comment type="sequence caution" evidence="2">
    <conflict type="erroneous initiation">
        <sequence resource="EMBL-CDS" id="ABF87165"/>
    </conflict>
</comment>
<evidence type="ECO:0000255" key="1">
    <source>
        <dbReference type="HAMAP-Rule" id="MF_01629"/>
    </source>
</evidence>
<evidence type="ECO:0000305" key="2"/>
<organism>
    <name type="scientific">Myxococcus xanthus (strain DK1622)</name>
    <dbReference type="NCBI Taxonomy" id="246197"/>
    <lineage>
        <taxon>Bacteria</taxon>
        <taxon>Pseudomonadati</taxon>
        <taxon>Myxococcota</taxon>
        <taxon>Myxococcia</taxon>
        <taxon>Myxococcales</taxon>
        <taxon>Cystobacterineae</taxon>
        <taxon>Myxococcaceae</taxon>
        <taxon>Myxococcus</taxon>
    </lineage>
</organism>
<name>PDXH_MYXXD</name>
<protein>
    <recommendedName>
        <fullName evidence="1">Pyridoxine/pyridoxamine 5'-phosphate oxidase</fullName>
        <ecNumber evidence="1">1.4.3.5</ecNumber>
    </recommendedName>
    <alternativeName>
        <fullName evidence="1">PNP/PMP oxidase</fullName>
        <shortName evidence="1">PNPOx</shortName>
    </alternativeName>
    <alternativeName>
        <fullName evidence="1">Pyridoxal 5'-phosphate synthase</fullName>
    </alternativeName>
</protein>
<dbReference type="EC" id="1.4.3.5" evidence="1"/>
<dbReference type="EMBL" id="CP000113">
    <property type="protein sequence ID" value="ABF87165.1"/>
    <property type="status" value="ALT_INIT"/>
    <property type="molecule type" value="Genomic_DNA"/>
</dbReference>
<dbReference type="RefSeq" id="WP_011551412.1">
    <property type="nucleotide sequence ID" value="NC_008095.1"/>
</dbReference>
<dbReference type="SMR" id="Q1DCS1"/>
<dbReference type="STRING" id="246197.MXAN_1295"/>
<dbReference type="EnsemblBacteria" id="ABF87165">
    <property type="protein sequence ID" value="ABF87165"/>
    <property type="gene ID" value="MXAN_1295"/>
</dbReference>
<dbReference type="GeneID" id="41358741"/>
<dbReference type="KEGG" id="mxa:MXAN_1295"/>
<dbReference type="eggNOG" id="COG0259">
    <property type="taxonomic scope" value="Bacteria"/>
</dbReference>
<dbReference type="HOGENOM" id="CLU_032263_2_2_7"/>
<dbReference type="OrthoDB" id="9780392at2"/>
<dbReference type="UniPathway" id="UPA01068">
    <property type="reaction ID" value="UER00304"/>
</dbReference>
<dbReference type="UniPathway" id="UPA01068">
    <property type="reaction ID" value="UER00305"/>
</dbReference>
<dbReference type="Proteomes" id="UP000002402">
    <property type="component" value="Chromosome"/>
</dbReference>
<dbReference type="GO" id="GO:0010181">
    <property type="term" value="F:FMN binding"/>
    <property type="evidence" value="ECO:0007669"/>
    <property type="project" value="InterPro"/>
</dbReference>
<dbReference type="GO" id="GO:0004733">
    <property type="term" value="F:pyridoxamine phosphate oxidase activity"/>
    <property type="evidence" value="ECO:0007669"/>
    <property type="project" value="UniProtKB-EC"/>
</dbReference>
<dbReference type="GO" id="GO:0008615">
    <property type="term" value="P:pyridoxine biosynthetic process"/>
    <property type="evidence" value="ECO:0007669"/>
    <property type="project" value="UniProtKB-KW"/>
</dbReference>
<dbReference type="FunFam" id="2.30.110.10:FF:000020">
    <property type="entry name" value="PNPO isoform 11"/>
    <property type="match status" value="1"/>
</dbReference>
<dbReference type="Gene3D" id="2.30.110.10">
    <property type="entry name" value="Electron Transport, Fmn-binding Protein, Chain A"/>
    <property type="match status" value="1"/>
</dbReference>
<dbReference type="HAMAP" id="MF_01629">
    <property type="entry name" value="PdxH"/>
    <property type="match status" value="1"/>
</dbReference>
<dbReference type="InterPro" id="IPR000659">
    <property type="entry name" value="Pyridox_Oxase"/>
</dbReference>
<dbReference type="InterPro" id="IPR019740">
    <property type="entry name" value="Pyridox_Oxase_CS"/>
</dbReference>
<dbReference type="InterPro" id="IPR011576">
    <property type="entry name" value="Pyridox_Oxase_N"/>
</dbReference>
<dbReference type="InterPro" id="IPR019576">
    <property type="entry name" value="Pyridoxamine_oxidase_dimer_C"/>
</dbReference>
<dbReference type="InterPro" id="IPR012349">
    <property type="entry name" value="Split_barrel_FMN-bd"/>
</dbReference>
<dbReference type="NCBIfam" id="TIGR00558">
    <property type="entry name" value="pdxH"/>
    <property type="match status" value="1"/>
</dbReference>
<dbReference type="NCBIfam" id="NF004231">
    <property type="entry name" value="PRK05679.1"/>
    <property type="match status" value="1"/>
</dbReference>
<dbReference type="PANTHER" id="PTHR10851:SF0">
    <property type="entry name" value="PYRIDOXINE-5'-PHOSPHATE OXIDASE"/>
    <property type="match status" value="1"/>
</dbReference>
<dbReference type="PANTHER" id="PTHR10851">
    <property type="entry name" value="PYRIDOXINE-5-PHOSPHATE OXIDASE"/>
    <property type="match status" value="1"/>
</dbReference>
<dbReference type="Pfam" id="PF10590">
    <property type="entry name" value="PNP_phzG_C"/>
    <property type="match status" value="1"/>
</dbReference>
<dbReference type="Pfam" id="PF01243">
    <property type="entry name" value="PNPOx_N"/>
    <property type="match status" value="1"/>
</dbReference>
<dbReference type="PIRSF" id="PIRSF000190">
    <property type="entry name" value="Pyd_amn-ph_oxd"/>
    <property type="match status" value="1"/>
</dbReference>
<dbReference type="SUPFAM" id="SSF50475">
    <property type="entry name" value="FMN-binding split barrel"/>
    <property type="match status" value="1"/>
</dbReference>
<dbReference type="PROSITE" id="PS01064">
    <property type="entry name" value="PYRIDOX_OXIDASE"/>
    <property type="match status" value="1"/>
</dbReference>